<name>YCIO_SHIFL</name>
<gene>
    <name type="primary">yciO</name>
    <name type="ordered locus">SF1270</name>
    <name type="ordered locus">S1355</name>
</gene>
<reference key="1">
    <citation type="journal article" date="2002" name="Nucleic Acids Res.">
        <title>Genome sequence of Shigella flexneri 2a: insights into pathogenicity through comparison with genomes of Escherichia coli K12 and O157.</title>
        <authorList>
            <person name="Jin Q."/>
            <person name="Yuan Z."/>
            <person name="Xu J."/>
            <person name="Wang Y."/>
            <person name="Shen Y."/>
            <person name="Lu W."/>
            <person name="Wang J."/>
            <person name="Liu H."/>
            <person name="Yang J."/>
            <person name="Yang F."/>
            <person name="Zhang X."/>
            <person name="Zhang J."/>
            <person name="Yang G."/>
            <person name="Wu H."/>
            <person name="Qu D."/>
            <person name="Dong J."/>
            <person name="Sun L."/>
            <person name="Xue Y."/>
            <person name="Zhao A."/>
            <person name="Gao Y."/>
            <person name="Zhu J."/>
            <person name="Kan B."/>
            <person name="Ding K."/>
            <person name="Chen S."/>
            <person name="Cheng H."/>
            <person name="Yao Z."/>
            <person name="He B."/>
            <person name="Chen R."/>
            <person name="Ma D."/>
            <person name="Qiang B."/>
            <person name="Wen Y."/>
            <person name="Hou Y."/>
            <person name="Yu J."/>
        </authorList>
    </citation>
    <scope>NUCLEOTIDE SEQUENCE [LARGE SCALE GENOMIC DNA]</scope>
    <source>
        <strain>301 / Serotype 2a</strain>
    </source>
</reference>
<reference key="2">
    <citation type="journal article" date="2003" name="Infect. Immun.">
        <title>Complete genome sequence and comparative genomics of Shigella flexneri serotype 2a strain 2457T.</title>
        <authorList>
            <person name="Wei J."/>
            <person name="Goldberg M.B."/>
            <person name="Burland V."/>
            <person name="Venkatesan M.M."/>
            <person name="Deng W."/>
            <person name="Fournier G."/>
            <person name="Mayhew G.F."/>
            <person name="Plunkett G. III"/>
            <person name="Rose D.J."/>
            <person name="Darling A."/>
            <person name="Mau B."/>
            <person name="Perna N.T."/>
            <person name="Payne S.M."/>
            <person name="Runyen-Janecky L.J."/>
            <person name="Zhou S."/>
            <person name="Schwartz D.C."/>
            <person name="Blattner F.R."/>
        </authorList>
    </citation>
    <scope>NUCLEOTIDE SEQUENCE [LARGE SCALE GENOMIC DNA]</scope>
    <source>
        <strain>ATCC 700930 / 2457T / Serotype 2a</strain>
    </source>
</reference>
<sequence>MSQFFYIHPDNPQQRLINQAVEIVRKGGVIVYPTDSGYALGCKIEDKNAMERICRIRQLPDGHNFTLMCRDLSELSTYSFVDNVAFRLMKNNTPGNYTFILKGTKEVPRRLLQEKRKTIGMRVPSNPIAQALLEALGEPMLSTSLMLPGSEFTESDPEEIKDRLEKQVDLIIHGGYLGQKPTTVIDLTDDTPVVVREGVGDVKPFL</sequence>
<feature type="chain" id="PRO_0000202016" description="Uncharacterized protein YciO">
    <location>
        <begin position="1"/>
        <end position="206"/>
    </location>
</feature>
<feature type="domain" description="YrdC-like" evidence="1">
    <location>
        <begin position="14"/>
        <end position="200"/>
    </location>
</feature>
<comment type="similarity">
    <text evidence="2">Belongs to the SUA5 family.</text>
</comment>
<comment type="sequence caution" evidence="2">
    <conflict type="erroneous initiation">
        <sequence resource="EMBL-CDS" id="AAN42883"/>
    </conflict>
</comment>
<comment type="sequence caution" evidence="2">
    <conflict type="erroneous initiation">
        <sequence resource="EMBL-CDS" id="AAP16768"/>
    </conflict>
</comment>
<proteinExistence type="inferred from homology"/>
<dbReference type="EMBL" id="AE005674">
    <property type="protein sequence ID" value="AAN42883.1"/>
    <property type="status" value="ALT_INIT"/>
    <property type="molecule type" value="Genomic_DNA"/>
</dbReference>
<dbReference type="EMBL" id="AE014073">
    <property type="protein sequence ID" value="AAP16768.1"/>
    <property type="status" value="ALT_INIT"/>
    <property type="molecule type" value="Genomic_DNA"/>
</dbReference>
<dbReference type="RefSeq" id="NP_707176.1">
    <property type="nucleotide sequence ID" value="NC_004337.2"/>
</dbReference>
<dbReference type="RefSeq" id="WP_001295575.1">
    <property type="nucleotide sequence ID" value="NZ_WPGW01000009.1"/>
</dbReference>
<dbReference type="SMR" id="P0AFR6"/>
<dbReference type="STRING" id="198214.SF1270"/>
<dbReference type="PaxDb" id="198214-SF1270"/>
<dbReference type="GeneID" id="1024232"/>
<dbReference type="KEGG" id="sfl:SF1270"/>
<dbReference type="KEGG" id="sfx:S1355"/>
<dbReference type="PATRIC" id="fig|198214.7.peg.1490"/>
<dbReference type="HOGENOM" id="CLU_031397_3_0_6"/>
<dbReference type="Proteomes" id="UP000001006">
    <property type="component" value="Chromosome"/>
</dbReference>
<dbReference type="Proteomes" id="UP000002673">
    <property type="component" value="Chromosome"/>
</dbReference>
<dbReference type="GO" id="GO:0003725">
    <property type="term" value="F:double-stranded RNA binding"/>
    <property type="evidence" value="ECO:0007669"/>
    <property type="project" value="InterPro"/>
</dbReference>
<dbReference type="FunFam" id="3.90.870.10:FF:000003">
    <property type="entry name" value="Sua5/YciO/YrdC/YwlC family protein"/>
    <property type="match status" value="1"/>
</dbReference>
<dbReference type="Gene3D" id="3.90.870.10">
    <property type="entry name" value="DHBP synthase"/>
    <property type="match status" value="1"/>
</dbReference>
<dbReference type="InterPro" id="IPR017945">
    <property type="entry name" value="DHBP_synth_RibB-like_a/b_dom"/>
</dbReference>
<dbReference type="InterPro" id="IPR006070">
    <property type="entry name" value="Sua5-like_dom"/>
</dbReference>
<dbReference type="InterPro" id="IPR052532">
    <property type="entry name" value="SUA5_domain"/>
</dbReference>
<dbReference type="NCBIfam" id="TIGR00057">
    <property type="entry name" value="L-threonylcarbamoyladenylate synthase"/>
    <property type="match status" value="1"/>
</dbReference>
<dbReference type="PANTHER" id="PTHR42828">
    <property type="entry name" value="DHBP SYNTHASE RIBB-LIKE ALPHA/BETA DOMAIN-CONTAINING PROTEIN"/>
    <property type="match status" value="1"/>
</dbReference>
<dbReference type="PANTHER" id="PTHR42828:SF3">
    <property type="entry name" value="THREONYLCARBAMOYL-AMP SYNTHASE"/>
    <property type="match status" value="1"/>
</dbReference>
<dbReference type="Pfam" id="PF01300">
    <property type="entry name" value="Sua5_yciO_yrdC"/>
    <property type="match status" value="1"/>
</dbReference>
<dbReference type="SUPFAM" id="SSF55821">
    <property type="entry name" value="YrdC/RibB"/>
    <property type="match status" value="1"/>
</dbReference>
<dbReference type="PROSITE" id="PS51163">
    <property type="entry name" value="YRDC"/>
    <property type="match status" value="1"/>
</dbReference>
<keyword id="KW-1185">Reference proteome</keyword>
<protein>
    <recommendedName>
        <fullName>Uncharacterized protein YciO</fullName>
    </recommendedName>
</protein>
<organism>
    <name type="scientific">Shigella flexneri</name>
    <dbReference type="NCBI Taxonomy" id="623"/>
    <lineage>
        <taxon>Bacteria</taxon>
        <taxon>Pseudomonadati</taxon>
        <taxon>Pseudomonadota</taxon>
        <taxon>Gammaproteobacteria</taxon>
        <taxon>Enterobacterales</taxon>
        <taxon>Enterobacteriaceae</taxon>
        <taxon>Shigella</taxon>
    </lineage>
</organism>
<accession>P0AFR6</accession>
<accession>P45847</accession>
<evidence type="ECO:0000255" key="1">
    <source>
        <dbReference type="PROSITE-ProRule" id="PRU00518"/>
    </source>
</evidence>
<evidence type="ECO:0000305" key="2"/>